<evidence type="ECO:0000250" key="1">
    <source>
        <dbReference type="UniProtKB" id="A2XE98"/>
    </source>
</evidence>
<evidence type="ECO:0000250" key="2">
    <source>
        <dbReference type="UniProtKB" id="O04986"/>
    </source>
</evidence>
<evidence type="ECO:0000250" key="3">
    <source>
        <dbReference type="UniProtKB" id="P68168"/>
    </source>
</evidence>
<evidence type="ECO:0000250" key="4">
    <source>
        <dbReference type="UniProtKB" id="Q42831"/>
    </source>
</evidence>
<evidence type="ECO:0000255" key="5">
    <source>
        <dbReference type="PROSITE-ProRule" id="PRU00238"/>
    </source>
</evidence>
<evidence type="ECO:0000269" key="6">
    <source>
    </source>
</evidence>
<evidence type="ECO:0000303" key="7">
    <source>
    </source>
</evidence>
<evidence type="ECO:0000305" key="8"/>
<evidence type="ECO:0000312" key="9">
    <source>
        <dbReference type="EMBL" id="EAY89160.1"/>
    </source>
</evidence>
<accession>A2XEA0</accession>
<comment type="function">
    <text evidence="2 4">Phytoglobin that reduces nitrite to nitric oxide under anoxic conditions (e.g. during flooding or in waterlogged soil) (By similarity). May not function as an oxygen storage or transport protein (By similarity). Has an unusually high affinity for O(2) through an hexacoordinate heme iron because of a very low dissociation constant (By similarity).</text>
</comment>
<comment type="catalytic activity">
    <reaction evidence="2">
        <text>Fe(III)-heme b-[protein] + nitric oxide + H2O = Fe(II)-heme b-[protein] + nitrite + 2 H(+)</text>
        <dbReference type="Rhea" id="RHEA:77711"/>
        <dbReference type="Rhea" id="RHEA-COMP:18975"/>
        <dbReference type="Rhea" id="RHEA-COMP:18976"/>
        <dbReference type="ChEBI" id="CHEBI:15377"/>
        <dbReference type="ChEBI" id="CHEBI:15378"/>
        <dbReference type="ChEBI" id="CHEBI:16301"/>
        <dbReference type="ChEBI" id="CHEBI:16480"/>
        <dbReference type="ChEBI" id="CHEBI:55376"/>
        <dbReference type="ChEBI" id="CHEBI:60344"/>
    </reaction>
    <physiologicalReaction direction="right-to-left" evidence="2">
        <dbReference type="Rhea" id="RHEA:77713"/>
    </physiologicalReaction>
</comment>
<comment type="cofactor">
    <cofactor evidence="3">
        <name>heme b</name>
        <dbReference type="ChEBI" id="CHEBI:60344"/>
    </cofactor>
    <text evidence="3">Binds 1 heme group per subunit.</text>
</comment>
<comment type="subunit">
    <text evidence="2">Homodimer.</text>
</comment>
<comment type="subcellular location">
    <subcellularLocation>
        <location evidence="1">Cytoplasm</location>
    </subcellularLocation>
    <subcellularLocation>
        <location evidence="1">Nucleus</location>
    </subcellularLocation>
</comment>
<comment type="induction">
    <text evidence="6">Accumulates upon salt (NaCL), drought, cold and asbcisic acid (ABA) treatment (PubMed:29044557). Induced in nutrient deficient conditions (e.g. Ca(2+) deprivation), but down-regulated in resupply conditions (PubMed:29044557).</text>
</comment>
<comment type="similarity">
    <text evidence="8">Belongs to the plant globin family.</text>
</comment>
<sequence>MAFASASNGAVRFTEEQEALVLKSWAIMKDDSANIGHRFFLKIFEVAPSARHLFSFLRNSDVPLEKNPNLKKHAMAVFVMTCEAAAQLRKTGRVTVRDTTIKRLGSTHFKNGVSDTHFEVARFALLETIKDGIPASMWSPEMKNAWGEAYEHLVAAIKEGMKPVALL</sequence>
<proteinExistence type="evidence at transcript level"/>
<dbReference type="EC" id="1.7.2.-" evidence="2"/>
<dbReference type="EMBL" id="CM000128">
    <property type="protein sequence ID" value="EAY89160.1"/>
    <property type="molecule type" value="Genomic_DNA"/>
</dbReference>
<dbReference type="SMR" id="A2XEA0"/>
<dbReference type="STRING" id="39946.A2XEA0"/>
<dbReference type="EnsemblPlants" id="BGIOSGA012188-TA">
    <property type="protein sequence ID" value="BGIOSGA012188-PA"/>
    <property type="gene ID" value="BGIOSGA012188"/>
</dbReference>
<dbReference type="Gramene" id="BGIOSGA012188-TA">
    <property type="protein sequence ID" value="BGIOSGA012188-PA"/>
    <property type="gene ID" value="BGIOSGA012188"/>
</dbReference>
<dbReference type="HOGENOM" id="CLU_003827_11_0_1"/>
<dbReference type="OMA" id="GERHVEY"/>
<dbReference type="Proteomes" id="UP000007015">
    <property type="component" value="Chromosome 3"/>
</dbReference>
<dbReference type="GO" id="GO:0005737">
    <property type="term" value="C:cytoplasm"/>
    <property type="evidence" value="ECO:0000250"/>
    <property type="project" value="UniProtKB"/>
</dbReference>
<dbReference type="GO" id="GO:0005634">
    <property type="term" value="C:nucleus"/>
    <property type="evidence" value="ECO:0000250"/>
    <property type="project" value="UniProtKB"/>
</dbReference>
<dbReference type="GO" id="GO:0020037">
    <property type="term" value="F:heme binding"/>
    <property type="evidence" value="ECO:0007669"/>
    <property type="project" value="InterPro"/>
</dbReference>
<dbReference type="GO" id="GO:0046872">
    <property type="term" value="F:metal ion binding"/>
    <property type="evidence" value="ECO:0007669"/>
    <property type="project" value="UniProtKB-KW"/>
</dbReference>
<dbReference type="GO" id="GO:0016491">
    <property type="term" value="F:oxidoreductase activity"/>
    <property type="evidence" value="ECO:0007669"/>
    <property type="project" value="UniProtKB-KW"/>
</dbReference>
<dbReference type="GO" id="GO:0019825">
    <property type="term" value="F:oxygen binding"/>
    <property type="evidence" value="ECO:0007669"/>
    <property type="project" value="InterPro"/>
</dbReference>
<dbReference type="GO" id="GO:0005344">
    <property type="term" value="F:oxygen carrier activity"/>
    <property type="evidence" value="ECO:0007669"/>
    <property type="project" value="UniProtKB-KW"/>
</dbReference>
<dbReference type="GO" id="GO:0072732">
    <property type="term" value="P:cellular response to calcium ion starvation"/>
    <property type="evidence" value="ECO:0000270"/>
    <property type="project" value="UniProtKB"/>
</dbReference>
<dbReference type="GO" id="GO:0009737">
    <property type="term" value="P:response to abscisic acid"/>
    <property type="evidence" value="ECO:0000270"/>
    <property type="project" value="UniProtKB"/>
</dbReference>
<dbReference type="GO" id="GO:0009409">
    <property type="term" value="P:response to cold"/>
    <property type="evidence" value="ECO:0000270"/>
    <property type="project" value="UniProtKB"/>
</dbReference>
<dbReference type="GO" id="GO:1902074">
    <property type="term" value="P:response to salt"/>
    <property type="evidence" value="ECO:0000270"/>
    <property type="project" value="UniProtKB"/>
</dbReference>
<dbReference type="GO" id="GO:0009414">
    <property type="term" value="P:response to water deprivation"/>
    <property type="evidence" value="ECO:0000270"/>
    <property type="project" value="UniProtKB"/>
</dbReference>
<dbReference type="CDD" id="cd14784">
    <property type="entry name" value="class1_nsHb-like"/>
    <property type="match status" value="1"/>
</dbReference>
<dbReference type="Gene3D" id="1.10.490.10">
    <property type="entry name" value="Globins"/>
    <property type="match status" value="1"/>
</dbReference>
<dbReference type="InterPro" id="IPR000971">
    <property type="entry name" value="Globin"/>
</dbReference>
<dbReference type="InterPro" id="IPR009050">
    <property type="entry name" value="Globin-like_sf"/>
</dbReference>
<dbReference type="InterPro" id="IPR012292">
    <property type="entry name" value="Globin/Proto"/>
</dbReference>
<dbReference type="InterPro" id="IPR001032">
    <property type="entry name" value="Leghaemoglobin-like"/>
</dbReference>
<dbReference type="InterPro" id="IPR019824">
    <property type="entry name" value="Leghaemoglobin_Fe_BS"/>
</dbReference>
<dbReference type="PANTHER" id="PTHR22924">
    <property type="entry name" value="LEGHEMOGLOBIN-RELATED"/>
    <property type="match status" value="1"/>
</dbReference>
<dbReference type="PANTHER" id="PTHR22924:SF98">
    <property type="entry name" value="NON-SYMBIOTIC HEMOGLOBIN 3"/>
    <property type="match status" value="1"/>
</dbReference>
<dbReference type="Pfam" id="PF00042">
    <property type="entry name" value="Globin"/>
    <property type="match status" value="1"/>
</dbReference>
<dbReference type="PRINTS" id="PR00188">
    <property type="entry name" value="PLANTGLOBIN"/>
</dbReference>
<dbReference type="SUPFAM" id="SSF46458">
    <property type="entry name" value="Globin-like"/>
    <property type="match status" value="1"/>
</dbReference>
<dbReference type="PROSITE" id="PS01033">
    <property type="entry name" value="GLOBIN"/>
    <property type="match status" value="1"/>
</dbReference>
<dbReference type="PROSITE" id="PS00208">
    <property type="entry name" value="PLANT_GLOBIN"/>
    <property type="match status" value="1"/>
</dbReference>
<keyword id="KW-0963">Cytoplasm</keyword>
<keyword id="KW-0349">Heme</keyword>
<keyword id="KW-0408">Iron</keyword>
<keyword id="KW-0479">Metal-binding</keyword>
<keyword id="KW-0539">Nucleus</keyword>
<keyword id="KW-0560">Oxidoreductase</keyword>
<keyword id="KW-0561">Oxygen transport</keyword>
<keyword id="KW-1185">Reference proteome</keyword>
<keyword id="KW-0813">Transport</keyword>
<gene>
    <name evidence="8" type="primary">NSHB4</name>
    <name evidence="8" type="synonym">GLB1D</name>
    <name evidence="8" type="synonym">HB4</name>
    <name evidence="8" type="synonym">Hb4-1</name>
    <name evidence="7" type="synonym">Pgb1.4</name>
    <name evidence="9" type="ORF">OsI_10654</name>
</gene>
<name>NSHB4_ORYSI</name>
<reference key="1">
    <citation type="journal article" date="2005" name="PLoS Biol.">
        <title>The genomes of Oryza sativa: a history of duplications.</title>
        <authorList>
            <person name="Yu J."/>
            <person name="Wang J."/>
            <person name="Lin W."/>
            <person name="Li S."/>
            <person name="Li H."/>
            <person name="Zhou J."/>
            <person name="Ni P."/>
            <person name="Dong W."/>
            <person name="Hu S."/>
            <person name="Zeng C."/>
            <person name="Zhang J."/>
            <person name="Zhang Y."/>
            <person name="Li R."/>
            <person name="Xu Z."/>
            <person name="Li S."/>
            <person name="Li X."/>
            <person name="Zheng H."/>
            <person name="Cong L."/>
            <person name="Lin L."/>
            <person name="Yin J."/>
            <person name="Geng J."/>
            <person name="Li G."/>
            <person name="Shi J."/>
            <person name="Liu J."/>
            <person name="Lv H."/>
            <person name="Li J."/>
            <person name="Wang J."/>
            <person name="Deng Y."/>
            <person name="Ran L."/>
            <person name="Shi X."/>
            <person name="Wang X."/>
            <person name="Wu Q."/>
            <person name="Li C."/>
            <person name="Ren X."/>
            <person name="Wang J."/>
            <person name="Wang X."/>
            <person name="Li D."/>
            <person name="Liu D."/>
            <person name="Zhang X."/>
            <person name="Ji Z."/>
            <person name="Zhao W."/>
            <person name="Sun Y."/>
            <person name="Zhang Z."/>
            <person name="Bao J."/>
            <person name="Han Y."/>
            <person name="Dong L."/>
            <person name="Ji J."/>
            <person name="Chen P."/>
            <person name="Wu S."/>
            <person name="Liu J."/>
            <person name="Xiao Y."/>
            <person name="Bu D."/>
            <person name="Tan J."/>
            <person name="Yang L."/>
            <person name="Ye C."/>
            <person name="Zhang J."/>
            <person name="Xu J."/>
            <person name="Zhou Y."/>
            <person name="Yu Y."/>
            <person name="Zhang B."/>
            <person name="Zhuang S."/>
            <person name="Wei H."/>
            <person name="Liu B."/>
            <person name="Lei M."/>
            <person name="Yu H."/>
            <person name="Li Y."/>
            <person name="Xu H."/>
            <person name="Wei S."/>
            <person name="He X."/>
            <person name="Fang L."/>
            <person name="Zhang Z."/>
            <person name="Zhang Y."/>
            <person name="Huang X."/>
            <person name="Su Z."/>
            <person name="Tong W."/>
            <person name="Li J."/>
            <person name="Tong Z."/>
            <person name="Li S."/>
            <person name="Ye J."/>
            <person name="Wang L."/>
            <person name="Fang L."/>
            <person name="Lei T."/>
            <person name="Chen C.-S."/>
            <person name="Chen H.-C."/>
            <person name="Xu Z."/>
            <person name="Li H."/>
            <person name="Huang H."/>
            <person name="Zhang F."/>
            <person name="Xu H."/>
            <person name="Li N."/>
            <person name="Zhao C."/>
            <person name="Li S."/>
            <person name="Dong L."/>
            <person name="Huang Y."/>
            <person name="Li L."/>
            <person name="Xi Y."/>
            <person name="Qi Q."/>
            <person name="Li W."/>
            <person name="Zhang B."/>
            <person name="Hu W."/>
            <person name="Zhang Y."/>
            <person name="Tian X."/>
            <person name="Jiao Y."/>
            <person name="Liang X."/>
            <person name="Jin J."/>
            <person name="Gao L."/>
            <person name="Zheng W."/>
            <person name="Hao B."/>
            <person name="Liu S.-M."/>
            <person name="Wang W."/>
            <person name="Yuan L."/>
            <person name="Cao M."/>
            <person name="McDermott J."/>
            <person name="Samudrala R."/>
            <person name="Wang J."/>
            <person name="Wong G.K.-S."/>
            <person name="Yang H."/>
        </authorList>
    </citation>
    <scope>NUCLEOTIDE SEQUENCE [LARGE SCALE GENOMIC DNA]</scope>
    <source>
        <strain>cv. 93-11</strain>
    </source>
</reference>
<reference key="2">
    <citation type="journal article" date="2018" name="Plant Cell Environ.">
        <title>Rice phytoglobins regulate responses under low mineral nutrients and abiotic stresses in Arabidopsis thaliana.</title>
        <authorList>
            <person name="Shankar A."/>
            <person name="Fernandes J.L."/>
            <person name="Kaur K."/>
            <person name="Sharma M."/>
            <person name="Kundu S."/>
            <person name="Pandey G.K."/>
        </authorList>
    </citation>
    <scope>GENE FAMILY</scope>
    <scope>NOMENCLATURE</scope>
    <scope>INDUCTION BY POTASSIUM; CALCIUM; SALT; DROUGHT; COLD AND ASBCISIC ACID</scope>
    <source>
        <strain>cv. IR64</strain>
    </source>
</reference>
<protein>
    <recommendedName>
        <fullName evidence="8">Anaerobic nitrite reductase NSHB4</fullName>
        <ecNumber evidence="2">1.7.2.-</ecNumber>
    </recommendedName>
    <alternativeName>
        <fullName evidence="8">Non-symbiotic hemoglobin 4</fullName>
        <shortName evidence="8">OsNSHB4</shortName>
        <shortName evidence="8">nsHb4-1</shortName>
        <shortName evidence="8">rHb4</shortName>
    </alternativeName>
    <alternativeName>
        <fullName evidence="8">ORYsa GLB1d</fullName>
    </alternativeName>
    <alternativeName>
        <fullName evidence="7">Phytoglobin 1.4</fullName>
        <shortName evidence="7">OsPgb1.4</shortName>
        <shortName evidence="7">Phytogb1.4</shortName>
    </alternativeName>
</protein>
<organism>
    <name type="scientific">Oryza sativa subsp. indica</name>
    <name type="common">Rice</name>
    <dbReference type="NCBI Taxonomy" id="39946"/>
    <lineage>
        <taxon>Eukaryota</taxon>
        <taxon>Viridiplantae</taxon>
        <taxon>Streptophyta</taxon>
        <taxon>Embryophyta</taxon>
        <taxon>Tracheophyta</taxon>
        <taxon>Spermatophyta</taxon>
        <taxon>Magnoliopsida</taxon>
        <taxon>Liliopsida</taxon>
        <taxon>Poales</taxon>
        <taxon>Poaceae</taxon>
        <taxon>BOP clade</taxon>
        <taxon>Oryzoideae</taxon>
        <taxon>Oryzeae</taxon>
        <taxon>Oryzinae</taxon>
        <taxon>Oryza</taxon>
        <taxon>Oryza sativa</taxon>
    </lineage>
</organism>
<feature type="chain" id="PRO_0000459738" description="Anaerobic nitrite reductase NSHB4">
    <location>
        <begin position="1"/>
        <end position="167"/>
    </location>
</feature>
<feature type="domain" description="Globin" evidence="5">
    <location>
        <begin position="12"/>
        <end position="162"/>
    </location>
</feature>
<feature type="short sequence motif" description="Homodimerization" evidence="2">
    <location>
        <begin position="45"/>
        <end position="49"/>
    </location>
</feature>
<feature type="short sequence motif" description="Homodimerization" evidence="2">
    <location>
        <begin position="115"/>
        <end position="127"/>
    </location>
</feature>
<feature type="binding site" evidence="3">
    <location>
        <position position="55"/>
    </location>
    <ligand>
        <name>heme b</name>
        <dbReference type="ChEBI" id="CHEBI:60344"/>
    </ligand>
</feature>
<feature type="binding site" description="distal binding residue" evidence="5">
    <location>
        <position position="73"/>
    </location>
    <ligand>
        <name>heme b</name>
        <dbReference type="ChEBI" id="CHEBI:60344"/>
    </ligand>
    <ligandPart>
        <name>Fe</name>
        <dbReference type="ChEBI" id="CHEBI:18248"/>
    </ligandPart>
</feature>
<feature type="binding site" evidence="2">
    <location>
        <position position="103"/>
    </location>
    <ligand>
        <name>heme b</name>
        <dbReference type="ChEBI" id="CHEBI:60344"/>
    </ligand>
</feature>
<feature type="binding site" evidence="2">
    <location>
        <position position="107"/>
    </location>
    <ligand>
        <name>heme b</name>
        <dbReference type="ChEBI" id="CHEBI:60344"/>
    </ligand>
</feature>
<feature type="binding site" description="proximal binding residue" evidence="5">
    <location>
        <position position="108"/>
    </location>
    <ligand>
        <name>heme b</name>
        <dbReference type="ChEBI" id="CHEBI:60344"/>
    </ligand>
    <ligandPart>
        <name>Fe</name>
        <dbReference type="ChEBI" id="CHEBI:18248"/>
    </ligandPart>
</feature>
<feature type="site" description="Homodimerization" evidence="2">
    <location>
        <position position="143"/>
    </location>
</feature>